<accession>D4FZ53</accession>
<proteinExistence type="evidence at protein level"/>
<name>BLTD_BACNB</name>
<feature type="chain" id="PRO_0000453461" description="Probable spermine N(1)-acetyltransferase">
    <location>
        <begin position="1"/>
        <end position="152"/>
    </location>
</feature>
<feature type="domain" description="N-acetyltransferase" evidence="3">
    <location>
        <begin position="3"/>
        <end position="152"/>
    </location>
</feature>
<feature type="active site" description="Proton donor" evidence="1">
    <location>
        <position position="129"/>
    </location>
</feature>
<feature type="binding site" evidence="2">
    <location>
        <begin position="82"/>
        <end position="84"/>
    </location>
    <ligand>
        <name>acetyl-CoA</name>
        <dbReference type="ChEBI" id="CHEBI:57288"/>
    </ligand>
</feature>
<feature type="binding site" evidence="2">
    <location>
        <begin position="89"/>
        <end position="95"/>
    </location>
    <ligand>
        <name>acetyl-CoA</name>
        <dbReference type="ChEBI" id="CHEBI:57288"/>
    </ligand>
</feature>
<feature type="binding site" evidence="2">
    <location>
        <begin position="122"/>
        <end position="131"/>
    </location>
    <ligand>
        <name>acetyl-CoA</name>
        <dbReference type="ChEBI" id="CHEBI:57288"/>
    </ligand>
</feature>
<reference key="1">
    <citation type="journal article" date="2010" name="BMC Genomics">
        <title>Whole genome assembly of a natto production strain Bacillus subtilis natto from very short read data.</title>
        <authorList>
            <person name="Nishito Y."/>
            <person name="Osana Y."/>
            <person name="Hachiya T."/>
            <person name="Popendorf K."/>
            <person name="Toyoda A."/>
            <person name="Fujiyama A."/>
            <person name="Itaya M."/>
            <person name="Sakakibara Y."/>
        </authorList>
    </citation>
    <scope>NUCLEOTIDE SEQUENCE [LARGE SCALE GENOMIC DNA]</scope>
    <source>
        <strain>BEST195</strain>
    </source>
</reference>
<reference key="2">
    <citation type="journal article" date="2014" name="PLoS ONE">
        <title>Whole genome complete resequencing of Bacillus subtilis natto by combining long reads with high-quality short reads.</title>
        <authorList>
            <person name="Kamada M."/>
            <person name="Hase S."/>
            <person name="Sato K."/>
            <person name="Toyoda A."/>
            <person name="Fujiyama A."/>
            <person name="Sakakibara Y."/>
        </authorList>
    </citation>
    <scope>GENOME REANNOTATION</scope>
    <source>
        <strain>BEST195</strain>
    </source>
</reference>
<reference key="3">
    <citation type="journal article" date="2018" name="J. Gen. Appl. Microbiol.">
        <title>Bacterial degradation of spermine and expression of spermidine/spermine acetyltransferase in Bacillus subtilis (natto) under liquid cultivation.</title>
        <authorList>
            <person name="Kobayashi K."/>
            <person name="Kubo Y."/>
            <person name="Horii Y."/>
            <person name="Nishiwaki T."/>
            <person name="Kamiyama S."/>
            <person name="Sone H."/>
            <person name="Watanabe S."/>
        </authorList>
    </citation>
    <scope>FUNCTION</scope>
    <scope>CATALYTIC ACTIVITY</scope>
    <scope>PATHWAY</scope>
    <scope>INDUCTION</scope>
    <source>
        <strain>BEST195</strain>
    </source>
</reference>
<organism>
    <name type="scientific">Bacillus subtilis subsp. natto (strain BEST195)</name>
    <dbReference type="NCBI Taxonomy" id="645657"/>
    <lineage>
        <taxon>Bacteria</taxon>
        <taxon>Bacillati</taxon>
        <taxon>Bacillota</taxon>
        <taxon>Bacilli</taxon>
        <taxon>Bacillales</taxon>
        <taxon>Bacillaceae</taxon>
        <taxon>Bacillus</taxon>
    </lineage>
</organism>
<dbReference type="EC" id="2.3.1.57" evidence="7"/>
<dbReference type="EMBL" id="AP011541">
    <property type="protein sequence ID" value="BAI86134.1"/>
    <property type="molecule type" value="Genomic_DNA"/>
</dbReference>
<dbReference type="RefSeq" id="WP_014480351.1">
    <property type="nucleotide sequence ID" value="NC_017196.2"/>
</dbReference>
<dbReference type="SMR" id="D4FZ53"/>
<dbReference type="STRING" id="86029.AWV81_13535"/>
<dbReference type="KEGG" id="bso:BSNT_09050"/>
<dbReference type="PATRIC" id="fig|645657.3.peg.3551"/>
<dbReference type="HOGENOM" id="CLU_111226_4_2_9"/>
<dbReference type="BRENDA" id="2.3.1.57">
    <property type="organism ID" value="17289"/>
</dbReference>
<dbReference type="UniPathway" id="UPA00211"/>
<dbReference type="GO" id="GO:0016747">
    <property type="term" value="F:acyltransferase activity, transferring groups other than amino-acyl groups"/>
    <property type="evidence" value="ECO:0007669"/>
    <property type="project" value="InterPro"/>
</dbReference>
<dbReference type="GO" id="GO:0046208">
    <property type="term" value="P:spermine catabolic process"/>
    <property type="evidence" value="ECO:0007669"/>
    <property type="project" value="UniProtKB-UniPathway"/>
</dbReference>
<dbReference type="CDD" id="cd04301">
    <property type="entry name" value="NAT_SF"/>
    <property type="match status" value="1"/>
</dbReference>
<dbReference type="Gene3D" id="3.40.630.30">
    <property type="match status" value="1"/>
</dbReference>
<dbReference type="Gene3D" id="1.10.287.900">
    <property type="entry name" value="The crystal structure of the spermine/spermidine acetyltransferase from enterococcus faecali"/>
    <property type="match status" value="1"/>
</dbReference>
<dbReference type="InterPro" id="IPR016181">
    <property type="entry name" value="Acyl_CoA_acyltransferase"/>
</dbReference>
<dbReference type="InterPro" id="IPR000182">
    <property type="entry name" value="GNAT_dom"/>
</dbReference>
<dbReference type="InterPro" id="IPR050276">
    <property type="entry name" value="MshD_Acetyltransferase"/>
</dbReference>
<dbReference type="InterPro" id="IPR027455">
    <property type="entry name" value="Sper_AcTfrase_N"/>
</dbReference>
<dbReference type="PANTHER" id="PTHR43617">
    <property type="entry name" value="L-AMINO ACID N-ACETYLTRANSFERASE"/>
    <property type="match status" value="1"/>
</dbReference>
<dbReference type="Pfam" id="PF00583">
    <property type="entry name" value="Acetyltransf_1"/>
    <property type="match status" value="1"/>
</dbReference>
<dbReference type="SUPFAM" id="SSF55729">
    <property type="entry name" value="Acyl-CoA N-acyltransferases (Nat)"/>
    <property type="match status" value="1"/>
</dbReference>
<dbReference type="PROSITE" id="PS51186">
    <property type="entry name" value="GNAT"/>
    <property type="match status" value="1"/>
</dbReference>
<protein>
    <recommendedName>
        <fullName evidence="6">Probable spermine N(1)-acetyltransferase</fullName>
        <ecNumber evidence="7">2.3.1.57</ecNumber>
    </recommendedName>
</protein>
<evidence type="ECO:0000250" key="1">
    <source>
        <dbReference type="UniProtKB" id="P0A951"/>
    </source>
</evidence>
<evidence type="ECO:0000250" key="2">
    <source>
        <dbReference type="UniProtKB" id="Q9KL03"/>
    </source>
</evidence>
<evidence type="ECO:0000255" key="3">
    <source>
        <dbReference type="PROSITE-ProRule" id="PRU00532"/>
    </source>
</evidence>
<evidence type="ECO:0000269" key="4">
    <source>
    </source>
</evidence>
<evidence type="ECO:0000303" key="5">
    <source>
    </source>
</evidence>
<evidence type="ECO:0000305" key="6"/>
<evidence type="ECO:0000305" key="7">
    <source>
    </source>
</evidence>
<evidence type="ECO:0000312" key="8">
    <source>
        <dbReference type="EMBL" id="BAI86134.1"/>
    </source>
</evidence>
<sequence>MSINIKAVTDDNRAAILDLHVSQNQLSYIESTKVCLEDAKECHYYKPVGLYYEGDLVGFAMYGLFPEYDEDNKNGRVWLDRFFIDKHYQGKGLGKKMLKALIQHLAELYKCKRIYLSIFENNIHAIRLYQRFGFQFNGELDFNGEKVMVKEL</sequence>
<gene>
    <name evidence="5" type="primary">bltD</name>
    <name evidence="8" type="ORF">BSNT_09050</name>
</gene>
<comment type="function">
    <text evidence="7">Probably acetylates spermine to N(1)-acetylspermine.</text>
</comment>
<comment type="catalytic activity">
    <reaction evidence="7">
        <text>an alkane-alpha,omega-diamine + acetyl-CoA = an N-acetylalkane-alpha,omega-diamine + CoA + H(+)</text>
        <dbReference type="Rhea" id="RHEA:11116"/>
        <dbReference type="Rhea" id="RHEA-COMP:9766"/>
        <dbReference type="Rhea" id="RHEA-COMP:9767"/>
        <dbReference type="ChEBI" id="CHEBI:15378"/>
        <dbReference type="ChEBI" id="CHEBI:57287"/>
        <dbReference type="ChEBI" id="CHEBI:57288"/>
        <dbReference type="ChEBI" id="CHEBI:70977"/>
        <dbReference type="ChEBI" id="CHEBI:70988"/>
        <dbReference type="EC" id="2.3.1.57"/>
    </reaction>
</comment>
<comment type="catalytic activity">
    <reaction evidence="7">
        <text>spermine + acetyl-CoA = N(1)-acetylspermine + CoA + H(+)</text>
        <dbReference type="Rhea" id="RHEA:33099"/>
        <dbReference type="ChEBI" id="CHEBI:15378"/>
        <dbReference type="ChEBI" id="CHEBI:45725"/>
        <dbReference type="ChEBI" id="CHEBI:57287"/>
        <dbReference type="ChEBI" id="CHEBI:57288"/>
        <dbReference type="ChEBI" id="CHEBI:58101"/>
        <dbReference type="EC" id="2.3.1.57"/>
    </reaction>
</comment>
<comment type="pathway">
    <text evidence="7">Amine and polyamine degradation; spermine degradation.</text>
</comment>
<comment type="induction">
    <text evidence="4">Expression is strongly induced by spermine, but not by agmatine, putrescine or spermidine.</text>
</comment>
<comment type="similarity">
    <text evidence="6">Belongs to the acetyltransferase family.</text>
</comment>
<keyword id="KW-0012">Acyltransferase</keyword>
<keyword id="KW-0808">Transferase</keyword>